<keyword id="KW-0012">Acyltransferase</keyword>
<keyword id="KW-0963">Cytoplasm</keyword>
<keyword id="KW-0539">Nucleus</keyword>
<keyword id="KW-1185">Reference proteome</keyword>
<keyword id="KW-0808">Transferase</keyword>
<protein>
    <recommendedName>
        <fullName>N-alpha-acetyltransferase 20</fullName>
        <ecNumber evidence="1">2.3.1.254</ecNumber>
    </recommendedName>
    <alternativeName>
        <fullName>Methionine N-acetyltransferase</fullName>
    </alternativeName>
    <alternativeName>
        <fullName>N-acetyltransferase 5</fullName>
    </alternativeName>
    <alternativeName>
        <fullName>N-terminal acetyltransferase B complex catalytic subunit NAA20</fullName>
    </alternativeName>
    <alternativeName>
        <fullName>N-terminal acetyltransferase B complex catalytic subunit NAT5</fullName>
        <shortName>NatB complex subunit NAT5</shortName>
    </alternativeName>
    <alternativeName>
        <fullName>NatB catalytic subunit</fullName>
    </alternativeName>
</protein>
<accession>Q2PFM2</accession>
<evidence type="ECO:0000250" key="1">
    <source>
        <dbReference type="UniProtKB" id="P61599"/>
    </source>
</evidence>
<evidence type="ECO:0000255" key="2">
    <source>
        <dbReference type="PROSITE-ProRule" id="PRU00532"/>
    </source>
</evidence>
<evidence type="ECO:0000305" key="3"/>
<organism>
    <name type="scientific">Macaca fascicularis</name>
    <name type="common">Crab-eating macaque</name>
    <name type="synonym">Cynomolgus monkey</name>
    <dbReference type="NCBI Taxonomy" id="9541"/>
    <lineage>
        <taxon>Eukaryota</taxon>
        <taxon>Metazoa</taxon>
        <taxon>Chordata</taxon>
        <taxon>Craniata</taxon>
        <taxon>Vertebrata</taxon>
        <taxon>Euteleostomi</taxon>
        <taxon>Mammalia</taxon>
        <taxon>Eutheria</taxon>
        <taxon>Euarchontoglires</taxon>
        <taxon>Primates</taxon>
        <taxon>Haplorrhini</taxon>
        <taxon>Catarrhini</taxon>
        <taxon>Cercopithecidae</taxon>
        <taxon>Cercopithecinae</taxon>
        <taxon>Macaca</taxon>
    </lineage>
</organism>
<comment type="function">
    <text evidence="1">Catalytic subunit of the NatB complex which catalyzes acetylation of the N-terminal methionine residues of peptides beginning with Met-Asp, Met-Glu, Met-Asn and Met-Gln. Proteins with cell cycle functions are overrepresented in the pool of NatB substrates. Required for maintaining the structure and function of actomyosin fibers and for proper cellular migration.</text>
</comment>
<comment type="catalytic activity">
    <reaction evidence="1">
        <text>N-terminal L-methionyl-L-asparaginyl-[protein] + acetyl-CoA = N-terminal N(alpha)-acetyl-L-methionyl-L-asparaginyl-[protein] + CoA + H(+)</text>
        <dbReference type="Rhea" id="RHEA:50484"/>
        <dbReference type="Rhea" id="RHEA-COMP:12694"/>
        <dbReference type="Rhea" id="RHEA-COMP:12695"/>
        <dbReference type="ChEBI" id="CHEBI:15378"/>
        <dbReference type="ChEBI" id="CHEBI:57287"/>
        <dbReference type="ChEBI" id="CHEBI:57288"/>
        <dbReference type="ChEBI" id="CHEBI:133356"/>
        <dbReference type="ChEBI" id="CHEBI:133358"/>
        <dbReference type="EC" id="2.3.1.254"/>
    </reaction>
</comment>
<comment type="catalytic activity">
    <reaction evidence="1">
        <text>N-terminal L-methionyl-L-glutaminyl-[protein] + acetyl-CoA = N-terminal N(alpha)-acetyl-L-methionyl-L-glutaminyl-[protein] + CoA + H(+)</text>
        <dbReference type="Rhea" id="RHEA:50492"/>
        <dbReference type="Rhea" id="RHEA-COMP:12698"/>
        <dbReference type="Rhea" id="RHEA-COMP:12699"/>
        <dbReference type="ChEBI" id="CHEBI:15378"/>
        <dbReference type="ChEBI" id="CHEBI:57287"/>
        <dbReference type="ChEBI" id="CHEBI:57288"/>
        <dbReference type="ChEBI" id="CHEBI:133361"/>
        <dbReference type="ChEBI" id="CHEBI:133362"/>
        <dbReference type="EC" id="2.3.1.254"/>
    </reaction>
</comment>
<comment type="catalytic activity">
    <reaction evidence="1">
        <text>N-terminal L-methionyl-L-aspartyl-[protein] + acetyl-CoA = N-terminal N(alpha)-acetyl-L-methionyl-L-aspartyl-[protein] + CoA + H(+)</text>
        <dbReference type="Rhea" id="RHEA:50480"/>
        <dbReference type="Rhea" id="RHEA-COMP:12692"/>
        <dbReference type="Rhea" id="RHEA-COMP:12693"/>
        <dbReference type="ChEBI" id="CHEBI:15378"/>
        <dbReference type="ChEBI" id="CHEBI:57287"/>
        <dbReference type="ChEBI" id="CHEBI:57288"/>
        <dbReference type="ChEBI" id="CHEBI:133045"/>
        <dbReference type="ChEBI" id="CHEBI:133063"/>
        <dbReference type="EC" id="2.3.1.254"/>
    </reaction>
</comment>
<comment type="catalytic activity">
    <reaction evidence="1">
        <text>N-terminal L-methionyl-L-glutamyl-[protein] + acetyl-CoA = N-terminal N(alpha)-acetyl-L-methionyl-L-glutamyl-[protein] + CoA + H(+)</text>
        <dbReference type="Rhea" id="RHEA:50488"/>
        <dbReference type="Rhea" id="RHEA-COMP:12696"/>
        <dbReference type="Rhea" id="RHEA-COMP:12697"/>
        <dbReference type="ChEBI" id="CHEBI:15378"/>
        <dbReference type="ChEBI" id="CHEBI:57287"/>
        <dbReference type="ChEBI" id="CHEBI:57288"/>
        <dbReference type="ChEBI" id="CHEBI:133359"/>
        <dbReference type="ChEBI" id="CHEBI:133360"/>
        <dbReference type="EC" id="2.3.1.254"/>
    </reaction>
</comment>
<comment type="subunit">
    <text evidence="1">Component of the N-terminal acetyltransferase B (NatB) complex which is composed of NAA20 and NAA25.</text>
</comment>
<comment type="subcellular location">
    <subcellularLocation>
        <location evidence="1">Cytoplasm</location>
    </subcellularLocation>
    <subcellularLocation>
        <location evidence="1">Nucleus</location>
    </subcellularLocation>
</comment>
<comment type="similarity">
    <text evidence="3">Belongs to the acetyltransferase family. ARD1 subfamily.</text>
</comment>
<name>NAA20_MACFA</name>
<reference key="1">
    <citation type="submission" date="2005-07" db="EMBL/GenBank/DDBJ databases">
        <title>Analysis of gene expression in cynomolgus monkey tissues by macaque cDNA oligo-chips.</title>
        <authorList>
            <person name="Kobayashi M."/>
            <person name="Tanuma R."/>
            <person name="Hirata M."/>
            <person name="Osada N."/>
            <person name="Kusuda J."/>
            <person name="Sugano S."/>
            <person name="Hashimoto K."/>
        </authorList>
    </citation>
    <scope>NUCLEOTIDE SEQUENCE [LARGE SCALE MRNA]</scope>
    <source>
        <tissue>Temporal cortex</tissue>
    </source>
</reference>
<feature type="chain" id="PRO_0000249840" description="N-alpha-acetyltransferase 20">
    <location>
        <begin position="1"/>
        <end position="178"/>
    </location>
</feature>
<feature type="domain" description="N-acetyltransferase" evidence="2">
    <location>
        <begin position="2"/>
        <end position="157"/>
    </location>
</feature>
<sequence length="178" mass="20368">MTTLRAFTCDDLFRFNNINLDPLTETYGIPFYLQYLAHWPEYFIVAEAPGGELMGYIMGKAEGSVAREEWHGHVTALSVAPEFRRLGLAAKLMELLEEISERKGGFFVDLFVRVSNQVAVNMYKQLGYSVYRTVIEYYSASNGEPDEDAYDMRKALSRDTEKKSIIPLPHPVRPEDIE</sequence>
<dbReference type="EC" id="2.3.1.254" evidence="1"/>
<dbReference type="EMBL" id="AB220565">
    <property type="protein sequence ID" value="BAE73098.1"/>
    <property type="molecule type" value="mRNA"/>
</dbReference>
<dbReference type="RefSeq" id="NP_001270877.1">
    <property type="nucleotide sequence ID" value="NM_001283948.1"/>
</dbReference>
<dbReference type="RefSeq" id="XP_045218351.1">
    <property type="nucleotide sequence ID" value="XM_045362416.2"/>
</dbReference>
<dbReference type="SMR" id="Q2PFM2"/>
<dbReference type="STRING" id="9541.ENSMFAP00000029572"/>
<dbReference type="GeneID" id="102145138"/>
<dbReference type="VEuPathDB" id="HostDB:ENSMFAG00000042031"/>
<dbReference type="eggNOG" id="KOG3234">
    <property type="taxonomic scope" value="Eukaryota"/>
</dbReference>
<dbReference type="OMA" id="EQHPSMR"/>
<dbReference type="Proteomes" id="UP000233100">
    <property type="component" value="Chromosome 10"/>
</dbReference>
<dbReference type="GO" id="GO:0005737">
    <property type="term" value="C:cytoplasm"/>
    <property type="evidence" value="ECO:0000250"/>
    <property type="project" value="UniProtKB"/>
</dbReference>
<dbReference type="GO" id="GO:0031416">
    <property type="term" value="C:NatB complex"/>
    <property type="evidence" value="ECO:0007669"/>
    <property type="project" value="TreeGrafter"/>
</dbReference>
<dbReference type="GO" id="GO:0005634">
    <property type="term" value="C:nucleus"/>
    <property type="evidence" value="ECO:0000250"/>
    <property type="project" value="UniProtKB"/>
</dbReference>
<dbReference type="GO" id="GO:0120518">
    <property type="term" value="F:protein N-terminal-methionine acetyltransferase activity"/>
    <property type="evidence" value="ECO:0007669"/>
    <property type="project" value="UniProtKB-EC"/>
</dbReference>
<dbReference type="GO" id="GO:0017190">
    <property type="term" value="P:N-terminal peptidyl-aspartic acid acetylation"/>
    <property type="evidence" value="ECO:0000250"/>
    <property type="project" value="UniProtKB"/>
</dbReference>
<dbReference type="GO" id="GO:0018002">
    <property type="term" value="P:N-terminal peptidyl-glutamic acid acetylation"/>
    <property type="evidence" value="ECO:0000250"/>
    <property type="project" value="UniProtKB"/>
</dbReference>
<dbReference type="GO" id="GO:0017192">
    <property type="term" value="P:N-terminal peptidyl-glutamine acetylation"/>
    <property type="evidence" value="ECO:0000250"/>
    <property type="project" value="UniProtKB"/>
</dbReference>
<dbReference type="GO" id="GO:0006474">
    <property type="term" value="P:N-terminal protein amino acid acetylation"/>
    <property type="evidence" value="ECO:0000250"/>
    <property type="project" value="UniProtKB"/>
</dbReference>
<dbReference type="CDD" id="cd04301">
    <property type="entry name" value="NAT_SF"/>
    <property type="match status" value="1"/>
</dbReference>
<dbReference type="FunFam" id="3.40.630.30:FF:000015">
    <property type="entry name" value="N-alpha-acetyltransferase 20 isoform X1"/>
    <property type="match status" value="1"/>
</dbReference>
<dbReference type="Gene3D" id="3.40.630.30">
    <property type="match status" value="1"/>
</dbReference>
<dbReference type="InterPro" id="IPR016181">
    <property type="entry name" value="Acyl_CoA_acyltransferase"/>
</dbReference>
<dbReference type="InterPro" id="IPR000182">
    <property type="entry name" value="GNAT_dom"/>
</dbReference>
<dbReference type="InterPro" id="IPR051646">
    <property type="entry name" value="NatB_acetyltransferase_subunit"/>
</dbReference>
<dbReference type="PANTHER" id="PTHR45910">
    <property type="entry name" value="N-ALPHA-ACETYLTRANSFERASE 20"/>
    <property type="match status" value="1"/>
</dbReference>
<dbReference type="PANTHER" id="PTHR45910:SF1">
    <property type="entry name" value="N-ALPHA-ACETYLTRANSFERASE 20"/>
    <property type="match status" value="1"/>
</dbReference>
<dbReference type="Pfam" id="PF00583">
    <property type="entry name" value="Acetyltransf_1"/>
    <property type="match status" value="1"/>
</dbReference>
<dbReference type="SUPFAM" id="SSF55729">
    <property type="entry name" value="Acyl-CoA N-acyltransferases (Nat)"/>
    <property type="match status" value="1"/>
</dbReference>
<dbReference type="PROSITE" id="PS51186">
    <property type="entry name" value="GNAT"/>
    <property type="match status" value="1"/>
</dbReference>
<proteinExistence type="evidence at transcript level"/>
<gene>
    <name type="primary">NAA20</name>
    <name type="synonym">NAT5</name>
    <name type="ORF">QtrA-15925</name>
</gene>